<sequence>MRKVVGSAYTLTSMLKNEGALDEVVELFMEKLGGFADEQAAFDFGEWLEMFSFDGVGTVFFGSPFGFIKDSIDYGGYINAVHTAMPLNSVVAMAPLWLRPVILYGGIAVPRIFKAIMAADGIRKTAVRVTEIAQARSTDSTSRRTDILSRILSIKDERPGSLTINDVHVEMWGAVIAGSDSTSGALRAIFYYLMKTPDTMTRLVKEIDAAFANGSLTHPIRYSQAIKLAYLDAVIQESLRVFPPFAVPMPRYAPAGGLEISGHYLKSGTKIGMNAMVVQFNKEVFGEDAHKFRPERWLESKDRYRAMNKAMLVFGAGTRTCIGKHLSKAEMYKVVPEILRRFTVRMAHDQPWKTRNATFIMQSNVVCRLERRSDE</sequence>
<dbReference type="EC" id="1.-.-.-" evidence="6"/>
<dbReference type="EMBL" id="AB688098">
    <property type="protein sequence ID" value="BAM74416.1"/>
    <property type="molecule type" value="Genomic_DNA"/>
</dbReference>
<dbReference type="SMR" id="L8AXV5"/>
<dbReference type="VEuPathDB" id="FungiDB:CC77DRAFT_1028036"/>
<dbReference type="GO" id="GO:0020037">
    <property type="term" value="F:heme binding"/>
    <property type="evidence" value="ECO:0007669"/>
    <property type="project" value="InterPro"/>
</dbReference>
<dbReference type="GO" id="GO:0005506">
    <property type="term" value="F:iron ion binding"/>
    <property type="evidence" value="ECO:0007669"/>
    <property type="project" value="InterPro"/>
</dbReference>
<dbReference type="GO" id="GO:0004497">
    <property type="term" value="F:monooxygenase activity"/>
    <property type="evidence" value="ECO:0007669"/>
    <property type="project" value="UniProtKB-KW"/>
</dbReference>
<dbReference type="GO" id="GO:0016705">
    <property type="term" value="F:oxidoreductase activity, acting on paired donors, with incorporation or reduction of molecular oxygen"/>
    <property type="evidence" value="ECO:0007669"/>
    <property type="project" value="InterPro"/>
</dbReference>
<dbReference type="CDD" id="cd11060">
    <property type="entry name" value="CYP57A1-like"/>
    <property type="match status" value="1"/>
</dbReference>
<dbReference type="Gene3D" id="1.10.630.10">
    <property type="entry name" value="Cytochrome P450"/>
    <property type="match status" value="1"/>
</dbReference>
<dbReference type="InterPro" id="IPR001128">
    <property type="entry name" value="Cyt_P450"/>
</dbReference>
<dbReference type="InterPro" id="IPR017972">
    <property type="entry name" value="Cyt_P450_CS"/>
</dbReference>
<dbReference type="InterPro" id="IPR002401">
    <property type="entry name" value="Cyt_P450_E_grp-I"/>
</dbReference>
<dbReference type="InterPro" id="IPR036396">
    <property type="entry name" value="Cyt_P450_sf"/>
</dbReference>
<dbReference type="InterPro" id="IPR050121">
    <property type="entry name" value="Cytochrome_P450_monoxygenase"/>
</dbReference>
<dbReference type="PANTHER" id="PTHR24305">
    <property type="entry name" value="CYTOCHROME P450"/>
    <property type="match status" value="1"/>
</dbReference>
<dbReference type="PANTHER" id="PTHR24305:SF229">
    <property type="entry name" value="P450, PUTATIVE (EUROFUNG)-RELATED"/>
    <property type="match status" value="1"/>
</dbReference>
<dbReference type="Pfam" id="PF00067">
    <property type="entry name" value="p450"/>
    <property type="match status" value="1"/>
</dbReference>
<dbReference type="PRINTS" id="PR00463">
    <property type="entry name" value="EP450I"/>
</dbReference>
<dbReference type="PRINTS" id="PR00385">
    <property type="entry name" value="P450"/>
</dbReference>
<dbReference type="SUPFAM" id="SSF48264">
    <property type="entry name" value="Cytochrome P450"/>
    <property type="match status" value="1"/>
</dbReference>
<dbReference type="PROSITE" id="PS00086">
    <property type="entry name" value="CYTOCHROME_P450"/>
    <property type="match status" value="1"/>
</dbReference>
<evidence type="ECO:0000250" key="1">
    <source>
        <dbReference type="UniProtKB" id="P04798"/>
    </source>
</evidence>
<evidence type="ECO:0000269" key="2">
    <source>
    </source>
</evidence>
<evidence type="ECO:0000303" key="3">
    <source>
    </source>
</evidence>
<evidence type="ECO:0000303" key="4">
    <source>
    </source>
</evidence>
<evidence type="ECO:0000305" key="5"/>
<evidence type="ECO:0000305" key="6">
    <source>
    </source>
</evidence>
<organism>
    <name type="scientific">Alternaria alternata</name>
    <name type="common">Alternaria rot fungus</name>
    <name type="synonym">Torula alternata</name>
    <dbReference type="NCBI Taxonomy" id="5599"/>
    <lineage>
        <taxon>Eukaryota</taxon>
        <taxon>Fungi</taxon>
        <taxon>Dikarya</taxon>
        <taxon>Ascomycota</taxon>
        <taxon>Pezizomycotina</taxon>
        <taxon>Dothideomycetes</taxon>
        <taxon>Pleosporomycetidae</taxon>
        <taxon>Pleosporales</taxon>
        <taxon>Pleosporineae</taxon>
        <taxon>Pleosporaceae</taxon>
        <taxon>Alternaria</taxon>
        <taxon>Alternaria sect. Alternaria</taxon>
        <taxon>Alternaria alternata complex</taxon>
    </lineage>
</organism>
<name>ACRS1_ALTAL</name>
<protein>
    <recommendedName>
        <fullName evidence="3">Cytochrome P450 monooxygenase ACRTS1</fullName>
        <ecNumber evidence="6">1.-.-.-</ecNumber>
    </recommendedName>
    <alternativeName>
        <fullName evidence="3">ACR-toxin biosynthesis protein S1</fullName>
    </alternativeName>
</protein>
<accession>L8AXV5</accession>
<feature type="chain" id="PRO_0000444819" description="Cytochrome P450 monooxygenase ACRTS1">
    <location>
        <begin position="1"/>
        <end position="375"/>
    </location>
</feature>
<feature type="binding site" description="axial binding residue" evidence="1">
    <location>
        <position position="321"/>
    </location>
    <ligand>
        <name>heme</name>
        <dbReference type="ChEBI" id="CHEBI:30413"/>
    </ligand>
    <ligandPart>
        <name>Fe</name>
        <dbReference type="ChEBI" id="CHEBI:18248"/>
    </ligandPart>
</feature>
<gene>
    <name evidence="3" type="primary">ACRTS1</name>
</gene>
<comment type="function">
    <text evidence="2 4">Cytochrome P450 monooxygenase; part of the gene cluster that mediates the biosynthesis of the host-selective toxins (HSTs) ACR-toxins responsible for brown spot of rough lemon disease by the rough lemon pathotype (PubMed:22779742). ACR-toxins cause uncoupling of mitochondrial oxidative-phosphorylation similar to that of classic protonophore (PubMed:22846083). The structure of the major form of ACR-toxin (ACR-toxin I) consists of an alpha-dihydropyrone ring in a 19-carbon polyalcohol, a typical polyketide structure. Minor toxins were characterized as having a pyrone ring with polyalcohol side chains different in length and showing weaker toxicity (PubMed:22846083). The highly reducing polyketide synthase ACRTS2 has all necessary enzymatic domains for multiple cycles of condensation and beta-keto processing (PubMed:22779742). The cytochrome P450 monooxygenase ACRTS1 has also been shown to be essential for ACR-toxin biosynthesis, however its exact role in the pathway has not been elucidated yet (PubMed:22779742).</text>
</comment>
<comment type="cofactor">
    <cofactor evidence="1">
        <name>heme</name>
        <dbReference type="ChEBI" id="CHEBI:30413"/>
    </cofactor>
</comment>
<comment type="pathway">
    <text evidence="2">Mycotoxin biosynthesis.</text>
</comment>
<comment type="disruption phenotype">
    <text evidence="2">Abolishes the production of ACR-toxin and impairs the pathogenicity (PubMed:22779742). Does not affect growth rate of cultures, sporulation, and spore germination (PubMed:22779742).</text>
</comment>
<comment type="miscellaneous">
    <text evidence="2">Gene clusters encoding host-selective toxins (HSTs) are localized on conditionally dispensable chromosomes (CDCs), also called supernumerary chromosomes, where they are present in multiple copies (PubMed:22779742). The CDCs are not essential for saprophytic growth but controls host-selective pathogenicity (PubMed:22779742). Although conventional disruption of ACRTS1 could not be accomplished due to the high number of the copies identified in the genome, the high sequence identity among these copies of ACRTS1 is likely an advantage for RNA silencing, because it allows knockdown of all copies of this gene simultaneously (PubMed:22779742).</text>
</comment>
<comment type="similarity">
    <text evidence="5">Belongs to the cytochrome P450 family.</text>
</comment>
<keyword id="KW-0349">Heme</keyword>
<keyword id="KW-0408">Iron</keyword>
<keyword id="KW-0479">Metal-binding</keyword>
<keyword id="KW-0503">Monooxygenase</keyword>
<keyword id="KW-0560">Oxidoreductase</keyword>
<keyword id="KW-0843">Virulence</keyword>
<reference key="1">
    <citation type="journal article" date="2012" name="Phytopathology">
        <title>Role of the pathotype-specific ACRTS1 gene encoding a hydroxylase involved in the biosynthesis of host-selective ACR-toxin in the rough lemon pathotype of Alternaria alternata.</title>
        <authorList>
            <person name="Izumi Y."/>
            <person name="Kamei E."/>
            <person name="Miyamoto Y."/>
            <person name="Ohtani K."/>
            <person name="Masunaka A."/>
            <person name="Fukumoto T."/>
            <person name="Gomi K."/>
            <person name="Tada Y."/>
            <person name="Ichimura K."/>
            <person name="Peever T.L."/>
            <person name="Akimitsu K."/>
        </authorList>
    </citation>
    <scope>NUCLEOTIDE SEQUENCE [GENOMIC DNA]</scope>
    <scope>FUNCTION</scope>
    <scope>DISRUPTION PHENOTYPE</scope>
    <scope>PATHWAY</scope>
    <source>
        <strain>HC1</strain>
    </source>
</reference>
<reference key="2">
    <citation type="journal article" date="2012" name="Mol. Plant Microbe Interact.">
        <title>A polyketide synthase gene, ACRTS2, is responsible for biosynthesis of host-selective ACR-toxin in the rough lemon pathotype of Alternaria alternata.</title>
        <authorList>
            <person name="Izumi Y."/>
            <person name="Ohtani K."/>
            <person name="Miyamoto Y."/>
            <person name="Masunaka A."/>
            <person name="Fukumoto T."/>
            <person name="Gomi K."/>
            <person name="Tada Y."/>
            <person name="Ichimura K."/>
            <person name="Peever T.L."/>
            <person name="Akimitsu K."/>
        </authorList>
    </citation>
    <scope>FUNCTION</scope>
    <source>
        <strain>HC1</strain>
    </source>
</reference>
<reference key="3">
    <citation type="journal article" date="2013" name="FEMS Microbiol. Rev.">
        <title>Host-selective toxins produced by the plant pathogenic fungus Alternaria alternata.</title>
        <authorList>
            <person name="Tsuge T."/>
            <person name="Harimoto Y."/>
            <person name="Akimitsu K."/>
            <person name="Ohtani K."/>
            <person name="Kodama M."/>
            <person name="Akagi Y."/>
            <person name="Egusa M."/>
            <person name="Yamamoto M."/>
            <person name="Otani H."/>
        </authorList>
    </citation>
    <scope>REVIEW ON HOST-SELECTIVE TOXINS</scope>
</reference>
<proteinExistence type="inferred from homology"/>